<evidence type="ECO:0000255" key="1">
    <source>
        <dbReference type="HAMAP-Rule" id="MF_01054"/>
    </source>
</evidence>
<proteinExistence type="inferred from homology"/>
<name>Y657_METMP</name>
<gene>
    <name type="ordered locus">MMP0657</name>
</gene>
<protein>
    <recommendedName>
        <fullName evidence="1">UPF0237 protein MMP0657</fullName>
    </recommendedName>
</protein>
<reference key="1">
    <citation type="journal article" date="2004" name="J. Bacteriol.">
        <title>Complete genome sequence of the genetically tractable hydrogenotrophic methanogen Methanococcus maripaludis.</title>
        <authorList>
            <person name="Hendrickson E.L."/>
            <person name="Kaul R."/>
            <person name="Zhou Y."/>
            <person name="Bovee D."/>
            <person name="Chapman P."/>
            <person name="Chung J."/>
            <person name="Conway de Macario E."/>
            <person name="Dodsworth J.A."/>
            <person name="Gillett W."/>
            <person name="Graham D.E."/>
            <person name="Hackett M."/>
            <person name="Haydock A.K."/>
            <person name="Kang A."/>
            <person name="Land M.L."/>
            <person name="Levy R."/>
            <person name="Lie T.J."/>
            <person name="Major T.A."/>
            <person name="Moore B.C."/>
            <person name="Porat I."/>
            <person name="Palmeiri A."/>
            <person name="Rouse G."/>
            <person name="Saenphimmachak C."/>
            <person name="Soell D."/>
            <person name="Van Dien S."/>
            <person name="Wang T."/>
            <person name="Whitman W.B."/>
            <person name="Xia Q."/>
            <person name="Zhang Y."/>
            <person name="Larimer F.W."/>
            <person name="Olson M.V."/>
            <person name="Leigh J.A."/>
        </authorList>
    </citation>
    <scope>NUCLEOTIDE SEQUENCE [LARGE SCALE GENOMIC DNA]</scope>
    <source>
        <strain>DSM 14266 / JCM 13030 / NBRC 101832 / S2 / LL</strain>
    </source>
</reference>
<keyword id="KW-1185">Reference proteome</keyword>
<comment type="similarity">
    <text evidence="1">Belongs to the UPF0237 family.</text>
</comment>
<accession>Q6LZH1</accession>
<feature type="chain" id="PRO_0000219913" description="UPF0237 protein MMP0657">
    <location>
        <begin position="1"/>
        <end position="90"/>
    </location>
</feature>
<feature type="domain" description="ACT" evidence="1">
    <location>
        <begin position="5"/>
        <end position="79"/>
    </location>
</feature>
<organism>
    <name type="scientific">Methanococcus maripaludis (strain DSM 14266 / JCM 13030 / NBRC 101832 / S2 / LL)</name>
    <dbReference type="NCBI Taxonomy" id="267377"/>
    <lineage>
        <taxon>Archaea</taxon>
        <taxon>Methanobacteriati</taxon>
        <taxon>Methanobacteriota</taxon>
        <taxon>Methanomada group</taxon>
        <taxon>Methanococci</taxon>
        <taxon>Methanococcales</taxon>
        <taxon>Methanococcaceae</taxon>
        <taxon>Methanococcus</taxon>
    </lineage>
</organism>
<sequence length="90" mass="10045">MENVVITVVGVDKPGIVAEVTKVLAQNSANIVDIRQTIMEDLFTMIMLVDISKISSDFSELNVALEKLGSEIGVKINVQHENIFKYMHRI</sequence>
<dbReference type="EMBL" id="BX950229">
    <property type="protein sequence ID" value="CAF30213.1"/>
    <property type="molecule type" value="Genomic_DNA"/>
</dbReference>
<dbReference type="RefSeq" id="WP_011170601.1">
    <property type="nucleotide sequence ID" value="NC_005791.1"/>
</dbReference>
<dbReference type="SMR" id="Q6LZH1"/>
<dbReference type="STRING" id="267377.MMP0657"/>
<dbReference type="EnsemblBacteria" id="CAF30213">
    <property type="protein sequence ID" value="CAF30213"/>
    <property type="gene ID" value="MMP0657"/>
</dbReference>
<dbReference type="KEGG" id="mmp:MMP0657"/>
<dbReference type="PATRIC" id="fig|267377.15.peg.674"/>
<dbReference type="eggNOG" id="arCOG04941">
    <property type="taxonomic scope" value="Archaea"/>
</dbReference>
<dbReference type="HOGENOM" id="CLU_155669_0_1_2"/>
<dbReference type="OrthoDB" id="27277at2157"/>
<dbReference type="Proteomes" id="UP000000590">
    <property type="component" value="Chromosome"/>
</dbReference>
<dbReference type="CDD" id="cd04872">
    <property type="entry name" value="ACT_1ZPV"/>
    <property type="match status" value="1"/>
</dbReference>
<dbReference type="Gene3D" id="3.30.70.260">
    <property type="match status" value="1"/>
</dbReference>
<dbReference type="HAMAP" id="MF_01054">
    <property type="entry name" value="UPF0237"/>
    <property type="match status" value="1"/>
</dbReference>
<dbReference type="InterPro" id="IPR045865">
    <property type="entry name" value="ACT-like_dom_sf"/>
</dbReference>
<dbReference type="InterPro" id="IPR002912">
    <property type="entry name" value="ACT_dom"/>
</dbReference>
<dbReference type="InterPro" id="IPR050990">
    <property type="entry name" value="UPF0237/GcvR_regulator"/>
</dbReference>
<dbReference type="InterPro" id="IPR022986">
    <property type="entry name" value="UPF0237_ACT"/>
</dbReference>
<dbReference type="NCBIfam" id="NF001220">
    <property type="entry name" value="PRK00194.1"/>
    <property type="match status" value="1"/>
</dbReference>
<dbReference type="PANTHER" id="PTHR34875">
    <property type="entry name" value="UPF0237 PROTEIN MJ1558"/>
    <property type="match status" value="1"/>
</dbReference>
<dbReference type="PANTHER" id="PTHR34875:SF6">
    <property type="entry name" value="UPF0237 PROTEIN MJ1558"/>
    <property type="match status" value="1"/>
</dbReference>
<dbReference type="Pfam" id="PF13740">
    <property type="entry name" value="ACT_6"/>
    <property type="match status" value="1"/>
</dbReference>
<dbReference type="SUPFAM" id="SSF55021">
    <property type="entry name" value="ACT-like"/>
    <property type="match status" value="1"/>
</dbReference>
<dbReference type="PROSITE" id="PS51671">
    <property type="entry name" value="ACT"/>
    <property type="match status" value="1"/>
</dbReference>